<reference key="1">
    <citation type="journal article" date="1996" name="DNA Res.">
        <title>Sequence analysis of the genome of the unicellular cyanobacterium Synechocystis sp. strain PCC6803. II. Sequence determination of the entire genome and assignment of potential protein-coding regions.</title>
        <authorList>
            <person name="Kaneko T."/>
            <person name="Sato S."/>
            <person name="Kotani H."/>
            <person name="Tanaka A."/>
            <person name="Asamizu E."/>
            <person name="Nakamura Y."/>
            <person name="Miyajima N."/>
            <person name="Hirosawa M."/>
            <person name="Sugiura M."/>
            <person name="Sasamoto S."/>
            <person name="Kimura T."/>
            <person name="Hosouchi T."/>
            <person name="Matsuno A."/>
            <person name="Muraki A."/>
            <person name="Nakazaki N."/>
            <person name="Naruo K."/>
            <person name="Okumura S."/>
            <person name="Shimpo S."/>
            <person name="Takeuchi C."/>
            <person name="Wada T."/>
            <person name="Watanabe A."/>
            <person name="Yamada M."/>
            <person name="Yasuda M."/>
            <person name="Tabata S."/>
        </authorList>
    </citation>
    <scope>NUCLEOTIDE SEQUENCE [LARGE SCALE GENOMIC DNA]</scope>
    <source>
        <strain>ATCC 27184 / PCC 6803 / Kazusa</strain>
    </source>
</reference>
<name>SFSA_SYNY3</name>
<gene>
    <name evidence="1" type="primary">sfsA</name>
    <name type="ordered locus">sll2014</name>
</gene>
<protein>
    <recommendedName>
        <fullName evidence="1">Sugar fermentation stimulation protein homolog</fullName>
    </recommendedName>
</protein>
<dbReference type="EMBL" id="BA000022">
    <property type="protein sequence ID" value="BAA17709.1"/>
    <property type="molecule type" value="Genomic_DNA"/>
</dbReference>
<dbReference type="PIR" id="S77151">
    <property type="entry name" value="S77151"/>
</dbReference>
<dbReference type="SMR" id="P73664"/>
<dbReference type="IntAct" id="P73664">
    <property type="interactions" value="1"/>
</dbReference>
<dbReference type="STRING" id="1148.gene:10498576"/>
<dbReference type="PaxDb" id="1148-1652790"/>
<dbReference type="EnsemblBacteria" id="BAA17709">
    <property type="protein sequence ID" value="BAA17709"/>
    <property type="gene ID" value="BAA17709"/>
</dbReference>
<dbReference type="KEGG" id="syn:sll2014"/>
<dbReference type="eggNOG" id="COG1489">
    <property type="taxonomic scope" value="Bacteria"/>
</dbReference>
<dbReference type="InParanoid" id="P73664"/>
<dbReference type="PhylomeDB" id="P73664"/>
<dbReference type="Proteomes" id="UP000001425">
    <property type="component" value="Chromosome"/>
</dbReference>
<dbReference type="GO" id="GO:0003677">
    <property type="term" value="F:DNA binding"/>
    <property type="evidence" value="ECO:0000318"/>
    <property type="project" value="GO_Central"/>
</dbReference>
<dbReference type="CDD" id="cd22359">
    <property type="entry name" value="SfsA-like_bacterial"/>
    <property type="match status" value="1"/>
</dbReference>
<dbReference type="FunFam" id="2.40.50.580:FF:000001">
    <property type="entry name" value="Sugar fermentation stimulation protein A"/>
    <property type="match status" value="1"/>
</dbReference>
<dbReference type="Gene3D" id="2.40.50.580">
    <property type="match status" value="1"/>
</dbReference>
<dbReference type="Gene3D" id="3.40.1350.60">
    <property type="match status" value="1"/>
</dbReference>
<dbReference type="HAMAP" id="MF_00095">
    <property type="entry name" value="SfsA"/>
    <property type="match status" value="1"/>
</dbReference>
<dbReference type="InterPro" id="IPR005224">
    <property type="entry name" value="SfsA"/>
</dbReference>
<dbReference type="InterPro" id="IPR040452">
    <property type="entry name" value="SfsA_C"/>
</dbReference>
<dbReference type="InterPro" id="IPR041465">
    <property type="entry name" value="SfsA_N"/>
</dbReference>
<dbReference type="NCBIfam" id="TIGR00230">
    <property type="entry name" value="sfsA"/>
    <property type="match status" value="1"/>
</dbReference>
<dbReference type="PANTHER" id="PTHR30545">
    <property type="entry name" value="SUGAR FERMENTATION STIMULATION PROTEIN A"/>
    <property type="match status" value="1"/>
</dbReference>
<dbReference type="PANTHER" id="PTHR30545:SF2">
    <property type="entry name" value="SUGAR FERMENTATION STIMULATION PROTEIN A"/>
    <property type="match status" value="1"/>
</dbReference>
<dbReference type="Pfam" id="PF03749">
    <property type="entry name" value="SfsA"/>
    <property type="match status" value="1"/>
</dbReference>
<dbReference type="Pfam" id="PF17746">
    <property type="entry name" value="SfsA_N"/>
    <property type="match status" value="1"/>
</dbReference>
<accession>P73664</accession>
<organism>
    <name type="scientific">Synechocystis sp. (strain ATCC 27184 / PCC 6803 / Kazusa)</name>
    <dbReference type="NCBI Taxonomy" id="1111708"/>
    <lineage>
        <taxon>Bacteria</taxon>
        <taxon>Bacillati</taxon>
        <taxon>Cyanobacteriota</taxon>
        <taxon>Cyanophyceae</taxon>
        <taxon>Synechococcales</taxon>
        <taxon>Merismopediaceae</taxon>
        <taxon>Synechocystis</taxon>
    </lineage>
</organism>
<evidence type="ECO:0000255" key="1">
    <source>
        <dbReference type="HAMAP-Rule" id="MF_00095"/>
    </source>
</evidence>
<feature type="chain" id="PRO_0000152312" description="Sugar fermentation stimulation protein homolog">
    <location>
        <begin position="1"/>
        <end position="237"/>
    </location>
</feature>
<keyword id="KW-1185">Reference proteome</keyword>
<sequence length="237" mass="26847">MDFLYPYPPLISGILVKRYKRFLADVELDNGEIVTAHCPNTGPMTGVCQVGAQVYLSKSDNPQRKLAYTWEMIQIDGTWVGVNTALPNRVIKQALADRIFPNLTNSYDTFKPEVPYGKDKKSRIDFLLTKPEEKSIYVEVKNTTLSQEKLALFPDTETTRGQKHLQELIDILPTARAVMLYFINRGDCTHFSPGDAYDRRYGELFRQAIAAGVEVMPCRFMVNPEGVKFLGMAELVV</sequence>
<proteinExistence type="inferred from homology"/>
<comment type="similarity">
    <text evidence="1">Belongs to the SfsA family.</text>
</comment>